<gene>
    <name evidence="1" type="primary">lysS</name>
    <name type="ordered locus">CGSHiGG_09780</name>
</gene>
<proteinExistence type="inferred from homology"/>
<sequence>MSEQEVKELDLNGEMLVRREKLAALRAKGNAFPNKFRRDVLAQDLHNQYDSEDGEILKEKGVEVQVAGRIMTRRAMGKATFITIQDMSGKIQLYVARDNLPEGVYKDEVGTWDLGDIIGVKGTLFKTKTDELTVKTTEVQLLTKALRPLPDKFHGLTDQEVRYRQRYLDLISNEESRRTFIIRSKVVAGIREYFISKGFMEVETPMLQVIPGGASARPFVTHHNALDVDMYLRIAPELYLKRLVVGGFERVFELNRNFRNEGVSVRHNPEFTMLEYYQAYADYHDLMDNTEELLRKLAIDILGTTIVKYGEYEFDFGKPFERITLHDATVKYGADKGIVKEDLYDFDRAKATAERLGIEVQKSWGLGSIVNAIFEEVAEHHLIQPTFLMAHPAEISPLARRNDENPDVTDRFELFIGGREIGNGFSELNDAEDQNERFDAQVAAKEAGDDEAMFKDEDFVVALEHGLPPTAGEGLGIDRLAMLYANAPSIRDVILFPAMRQK</sequence>
<reference key="1">
    <citation type="journal article" date="2007" name="Genome Biol.">
        <title>Characterization and modeling of the Haemophilus influenzae core and supragenomes based on the complete genomic sequences of Rd and 12 clinical nontypeable strains.</title>
        <authorList>
            <person name="Hogg J.S."/>
            <person name="Hu F.Z."/>
            <person name="Janto B."/>
            <person name="Boissy R."/>
            <person name="Hayes J."/>
            <person name="Keefe R."/>
            <person name="Post J.C."/>
            <person name="Ehrlich G.D."/>
        </authorList>
    </citation>
    <scope>NUCLEOTIDE SEQUENCE [LARGE SCALE GENOMIC DNA]</scope>
    <source>
        <strain>PittGG</strain>
    </source>
</reference>
<keyword id="KW-0030">Aminoacyl-tRNA synthetase</keyword>
<keyword id="KW-0067">ATP-binding</keyword>
<keyword id="KW-0963">Cytoplasm</keyword>
<keyword id="KW-0436">Ligase</keyword>
<keyword id="KW-0460">Magnesium</keyword>
<keyword id="KW-0479">Metal-binding</keyword>
<keyword id="KW-0547">Nucleotide-binding</keyword>
<keyword id="KW-0648">Protein biosynthesis</keyword>
<comment type="catalytic activity">
    <reaction evidence="1">
        <text>tRNA(Lys) + L-lysine + ATP = L-lysyl-tRNA(Lys) + AMP + diphosphate</text>
        <dbReference type="Rhea" id="RHEA:20792"/>
        <dbReference type="Rhea" id="RHEA-COMP:9696"/>
        <dbReference type="Rhea" id="RHEA-COMP:9697"/>
        <dbReference type="ChEBI" id="CHEBI:30616"/>
        <dbReference type="ChEBI" id="CHEBI:32551"/>
        <dbReference type="ChEBI" id="CHEBI:33019"/>
        <dbReference type="ChEBI" id="CHEBI:78442"/>
        <dbReference type="ChEBI" id="CHEBI:78529"/>
        <dbReference type="ChEBI" id="CHEBI:456215"/>
        <dbReference type="EC" id="6.1.1.6"/>
    </reaction>
</comment>
<comment type="cofactor">
    <cofactor evidence="1">
        <name>Mg(2+)</name>
        <dbReference type="ChEBI" id="CHEBI:18420"/>
    </cofactor>
    <text evidence="1">Binds 3 Mg(2+) ions per subunit.</text>
</comment>
<comment type="subunit">
    <text evidence="1">Homodimer.</text>
</comment>
<comment type="subcellular location">
    <subcellularLocation>
        <location evidence="1">Cytoplasm</location>
    </subcellularLocation>
</comment>
<comment type="similarity">
    <text evidence="1">Belongs to the class-II aminoacyl-tRNA synthetase family.</text>
</comment>
<dbReference type="EC" id="6.1.1.6" evidence="1"/>
<dbReference type="EMBL" id="CP000672">
    <property type="protein sequence ID" value="ABR00730.1"/>
    <property type="molecule type" value="Genomic_DNA"/>
</dbReference>
<dbReference type="SMR" id="A5UIX4"/>
<dbReference type="KEGG" id="hiq:CGSHiGG_09780"/>
<dbReference type="HOGENOM" id="CLU_008255_6_0_6"/>
<dbReference type="Proteomes" id="UP000001990">
    <property type="component" value="Chromosome"/>
</dbReference>
<dbReference type="GO" id="GO:0005829">
    <property type="term" value="C:cytosol"/>
    <property type="evidence" value="ECO:0007669"/>
    <property type="project" value="TreeGrafter"/>
</dbReference>
<dbReference type="GO" id="GO:0005524">
    <property type="term" value="F:ATP binding"/>
    <property type="evidence" value="ECO:0007669"/>
    <property type="project" value="UniProtKB-UniRule"/>
</dbReference>
<dbReference type="GO" id="GO:0004824">
    <property type="term" value="F:lysine-tRNA ligase activity"/>
    <property type="evidence" value="ECO:0007669"/>
    <property type="project" value="UniProtKB-UniRule"/>
</dbReference>
<dbReference type="GO" id="GO:0000287">
    <property type="term" value="F:magnesium ion binding"/>
    <property type="evidence" value="ECO:0007669"/>
    <property type="project" value="UniProtKB-UniRule"/>
</dbReference>
<dbReference type="GO" id="GO:0000049">
    <property type="term" value="F:tRNA binding"/>
    <property type="evidence" value="ECO:0007669"/>
    <property type="project" value="TreeGrafter"/>
</dbReference>
<dbReference type="GO" id="GO:0006430">
    <property type="term" value="P:lysyl-tRNA aminoacylation"/>
    <property type="evidence" value="ECO:0007669"/>
    <property type="project" value="UniProtKB-UniRule"/>
</dbReference>
<dbReference type="CDD" id="cd00775">
    <property type="entry name" value="LysRS_core"/>
    <property type="match status" value="1"/>
</dbReference>
<dbReference type="CDD" id="cd04322">
    <property type="entry name" value="LysRS_N"/>
    <property type="match status" value="1"/>
</dbReference>
<dbReference type="FunFam" id="2.40.50.140:FF:000024">
    <property type="entry name" value="Lysine--tRNA ligase"/>
    <property type="match status" value="1"/>
</dbReference>
<dbReference type="FunFam" id="3.30.930.10:FF:000001">
    <property type="entry name" value="Lysine--tRNA ligase"/>
    <property type="match status" value="1"/>
</dbReference>
<dbReference type="Gene3D" id="3.30.930.10">
    <property type="entry name" value="Bira Bifunctional Protein, Domain 2"/>
    <property type="match status" value="1"/>
</dbReference>
<dbReference type="Gene3D" id="2.40.50.140">
    <property type="entry name" value="Nucleic acid-binding proteins"/>
    <property type="match status" value="1"/>
</dbReference>
<dbReference type="HAMAP" id="MF_00252">
    <property type="entry name" value="Lys_tRNA_synth_class2"/>
    <property type="match status" value="1"/>
</dbReference>
<dbReference type="InterPro" id="IPR004364">
    <property type="entry name" value="Aa-tRNA-synt_II"/>
</dbReference>
<dbReference type="InterPro" id="IPR006195">
    <property type="entry name" value="aa-tRNA-synth_II"/>
</dbReference>
<dbReference type="InterPro" id="IPR045864">
    <property type="entry name" value="aa-tRNA-synth_II/BPL/LPL"/>
</dbReference>
<dbReference type="InterPro" id="IPR002313">
    <property type="entry name" value="Lys-tRNA-ligase_II"/>
</dbReference>
<dbReference type="InterPro" id="IPR034762">
    <property type="entry name" value="Lys-tRNA-ligase_II_bac/euk"/>
</dbReference>
<dbReference type="InterPro" id="IPR044136">
    <property type="entry name" value="Lys-tRNA-ligase_II_N"/>
</dbReference>
<dbReference type="InterPro" id="IPR018149">
    <property type="entry name" value="Lys-tRNA-synth_II_C"/>
</dbReference>
<dbReference type="InterPro" id="IPR012340">
    <property type="entry name" value="NA-bd_OB-fold"/>
</dbReference>
<dbReference type="InterPro" id="IPR004365">
    <property type="entry name" value="NA-bd_OB_tRNA"/>
</dbReference>
<dbReference type="NCBIfam" id="TIGR00499">
    <property type="entry name" value="lysS_bact"/>
    <property type="match status" value="1"/>
</dbReference>
<dbReference type="NCBIfam" id="NF001756">
    <property type="entry name" value="PRK00484.1"/>
    <property type="match status" value="1"/>
</dbReference>
<dbReference type="PANTHER" id="PTHR42918:SF15">
    <property type="entry name" value="LYSINE--TRNA LIGASE, CHLOROPLASTIC_MITOCHONDRIAL"/>
    <property type="match status" value="1"/>
</dbReference>
<dbReference type="PANTHER" id="PTHR42918">
    <property type="entry name" value="LYSYL-TRNA SYNTHETASE"/>
    <property type="match status" value="1"/>
</dbReference>
<dbReference type="Pfam" id="PF00152">
    <property type="entry name" value="tRNA-synt_2"/>
    <property type="match status" value="1"/>
</dbReference>
<dbReference type="Pfam" id="PF01336">
    <property type="entry name" value="tRNA_anti-codon"/>
    <property type="match status" value="1"/>
</dbReference>
<dbReference type="PIRSF" id="PIRSF039101">
    <property type="entry name" value="LysRS2"/>
    <property type="match status" value="1"/>
</dbReference>
<dbReference type="PRINTS" id="PR00982">
    <property type="entry name" value="TRNASYNTHLYS"/>
</dbReference>
<dbReference type="SUPFAM" id="SSF55681">
    <property type="entry name" value="Class II aaRS and biotin synthetases"/>
    <property type="match status" value="1"/>
</dbReference>
<dbReference type="SUPFAM" id="SSF50249">
    <property type="entry name" value="Nucleic acid-binding proteins"/>
    <property type="match status" value="1"/>
</dbReference>
<dbReference type="PROSITE" id="PS50862">
    <property type="entry name" value="AA_TRNA_LIGASE_II"/>
    <property type="match status" value="1"/>
</dbReference>
<accession>A5UIX4</accession>
<evidence type="ECO:0000255" key="1">
    <source>
        <dbReference type="HAMAP-Rule" id="MF_00252"/>
    </source>
</evidence>
<name>SYK_HAEIG</name>
<protein>
    <recommendedName>
        <fullName evidence="1">Lysine--tRNA ligase</fullName>
        <ecNumber evidence="1">6.1.1.6</ecNumber>
    </recommendedName>
    <alternativeName>
        <fullName evidence="1">Lysyl-tRNA synthetase</fullName>
        <shortName evidence="1">LysRS</shortName>
    </alternativeName>
</protein>
<organism>
    <name type="scientific">Haemophilus influenzae (strain PittGG)</name>
    <dbReference type="NCBI Taxonomy" id="374931"/>
    <lineage>
        <taxon>Bacteria</taxon>
        <taxon>Pseudomonadati</taxon>
        <taxon>Pseudomonadota</taxon>
        <taxon>Gammaproteobacteria</taxon>
        <taxon>Pasteurellales</taxon>
        <taxon>Pasteurellaceae</taxon>
        <taxon>Haemophilus</taxon>
    </lineage>
</organism>
<feature type="chain" id="PRO_1000101119" description="Lysine--tRNA ligase">
    <location>
        <begin position="1"/>
        <end position="502"/>
    </location>
</feature>
<feature type="binding site" evidence="1">
    <location>
        <position position="413"/>
    </location>
    <ligand>
        <name>Mg(2+)</name>
        <dbReference type="ChEBI" id="CHEBI:18420"/>
        <label>1</label>
    </ligand>
</feature>
<feature type="binding site" evidence="1">
    <location>
        <position position="420"/>
    </location>
    <ligand>
        <name>Mg(2+)</name>
        <dbReference type="ChEBI" id="CHEBI:18420"/>
        <label>1</label>
    </ligand>
</feature>
<feature type="binding site" evidence="1">
    <location>
        <position position="420"/>
    </location>
    <ligand>
        <name>Mg(2+)</name>
        <dbReference type="ChEBI" id="CHEBI:18420"/>
        <label>2</label>
    </ligand>
</feature>